<gene>
    <name evidence="1" type="primary">rplV</name>
    <name type="ordered locus">LCK_01590</name>
</gene>
<name>RL22_LEUCK</name>
<protein>
    <recommendedName>
        <fullName evidence="1">Large ribosomal subunit protein uL22</fullName>
    </recommendedName>
    <alternativeName>
        <fullName evidence="2">50S ribosomal protein L22</fullName>
    </alternativeName>
</protein>
<sequence length="118" mass="13122">MAEQITSARATAKIVRVAPRKARLVLDTIRRKSVNEAYAILKFLPNTSTEDIYKVLNSAVANAENNFSLDREDLIVKEAFANEGPTLKRFRPRAKGSASPINKRTSHITIVVAEKEAK</sequence>
<keyword id="KW-1185">Reference proteome</keyword>
<keyword id="KW-0687">Ribonucleoprotein</keyword>
<keyword id="KW-0689">Ribosomal protein</keyword>
<keyword id="KW-0694">RNA-binding</keyword>
<keyword id="KW-0699">rRNA-binding</keyword>
<evidence type="ECO:0000255" key="1">
    <source>
        <dbReference type="HAMAP-Rule" id="MF_01331"/>
    </source>
</evidence>
<evidence type="ECO:0000305" key="2"/>
<organism>
    <name type="scientific">Leuconostoc citreum (strain KM20)</name>
    <dbReference type="NCBI Taxonomy" id="349519"/>
    <lineage>
        <taxon>Bacteria</taxon>
        <taxon>Bacillati</taxon>
        <taxon>Bacillota</taxon>
        <taxon>Bacilli</taxon>
        <taxon>Lactobacillales</taxon>
        <taxon>Lactobacillaceae</taxon>
        <taxon>Leuconostoc</taxon>
    </lineage>
</organism>
<dbReference type="EMBL" id="DQ489736">
    <property type="protein sequence ID" value="ACA83413.1"/>
    <property type="molecule type" value="Genomic_DNA"/>
</dbReference>
<dbReference type="RefSeq" id="WP_004899456.1">
    <property type="nucleotide sequence ID" value="NC_010471.1"/>
</dbReference>
<dbReference type="SMR" id="B1MW09"/>
<dbReference type="STRING" id="349519.LCK_01590"/>
<dbReference type="GeneID" id="66531371"/>
<dbReference type="KEGG" id="lci:LCK_01590"/>
<dbReference type="eggNOG" id="COG0091">
    <property type="taxonomic scope" value="Bacteria"/>
</dbReference>
<dbReference type="HOGENOM" id="CLU_083987_3_3_9"/>
<dbReference type="OrthoDB" id="9805969at2"/>
<dbReference type="Proteomes" id="UP000002166">
    <property type="component" value="Chromosome"/>
</dbReference>
<dbReference type="GO" id="GO:0022625">
    <property type="term" value="C:cytosolic large ribosomal subunit"/>
    <property type="evidence" value="ECO:0007669"/>
    <property type="project" value="TreeGrafter"/>
</dbReference>
<dbReference type="GO" id="GO:0019843">
    <property type="term" value="F:rRNA binding"/>
    <property type="evidence" value="ECO:0007669"/>
    <property type="project" value="UniProtKB-UniRule"/>
</dbReference>
<dbReference type="GO" id="GO:0003735">
    <property type="term" value="F:structural constituent of ribosome"/>
    <property type="evidence" value="ECO:0007669"/>
    <property type="project" value="InterPro"/>
</dbReference>
<dbReference type="GO" id="GO:0006412">
    <property type="term" value="P:translation"/>
    <property type="evidence" value="ECO:0007669"/>
    <property type="project" value="UniProtKB-UniRule"/>
</dbReference>
<dbReference type="CDD" id="cd00336">
    <property type="entry name" value="Ribosomal_L22"/>
    <property type="match status" value="1"/>
</dbReference>
<dbReference type="Gene3D" id="3.90.470.10">
    <property type="entry name" value="Ribosomal protein L22/L17"/>
    <property type="match status" value="1"/>
</dbReference>
<dbReference type="HAMAP" id="MF_01331_B">
    <property type="entry name" value="Ribosomal_uL22_B"/>
    <property type="match status" value="1"/>
</dbReference>
<dbReference type="InterPro" id="IPR001063">
    <property type="entry name" value="Ribosomal_uL22"/>
</dbReference>
<dbReference type="InterPro" id="IPR005727">
    <property type="entry name" value="Ribosomal_uL22_bac/chlpt-type"/>
</dbReference>
<dbReference type="InterPro" id="IPR047867">
    <property type="entry name" value="Ribosomal_uL22_bac/org-type"/>
</dbReference>
<dbReference type="InterPro" id="IPR018260">
    <property type="entry name" value="Ribosomal_uL22_CS"/>
</dbReference>
<dbReference type="InterPro" id="IPR036394">
    <property type="entry name" value="Ribosomal_uL22_sf"/>
</dbReference>
<dbReference type="NCBIfam" id="TIGR01044">
    <property type="entry name" value="rplV_bact"/>
    <property type="match status" value="1"/>
</dbReference>
<dbReference type="PANTHER" id="PTHR13501">
    <property type="entry name" value="CHLOROPLAST 50S RIBOSOMAL PROTEIN L22-RELATED"/>
    <property type="match status" value="1"/>
</dbReference>
<dbReference type="PANTHER" id="PTHR13501:SF8">
    <property type="entry name" value="LARGE RIBOSOMAL SUBUNIT PROTEIN UL22M"/>
    <property type="match status" value="1"/>
</dbReference>
<dbReference type="Pfam" id="PF00237">
    <property type="entry name" value="Ribosomal_L22"/>
    <property type="match status" value="1"/>
</dbReference>
<dbReference type="SUPFAM" id="SSF54843">
    <property type="entry name" value="Ribosomal protein L22"/>
    <property type="match status" value="1"/>
</dbReference>
<dbReference type="PROSITE" id="PS00464">
    <property type="entry name" value="RIBOSOMAL_L22"/>
    <property type="match status" value="1"/>
</dbReference>
<comment type="function">
    <text evidence="1">This protein binds specifically to 23S rRNA; its binding is stimulated by other ribosomal proteins, e.g. L4, L17, and L20. It is important during the early stages of 50S assembly. It makes multiple contacts with different domains of the 23S rRNA in the assembled 50S subunit and ribosome (By similarity).</text>
</comment>
<comment type="function">
    <text evidence="1">The globular domain of the protein is located near the polypeptide exit tunnel on the outside of the subunit, while an extended beta-hairpin is found that lines the wall of the exit tunnel in the center of the 70S ribosome.</text>
</comment>
<comment type="subunit">
    <text evidence="1">Part of the 50S ribosomal subunit.</text>
</comment>
<comment type="similarity">
    <text evidence="1">Belongs to the universal ribosomal protein uL22 family.</text>
</comment>
<proteinExistence type="inferred from homology"/>
<feature type="chain" id="PRO_1000142280" description="Large ribosomal subunit protein uL22">
    <location>
        <begin position="1"/>
        <end position="118"/>
    </location>
</feature>
<accession>B1MW09</accession>
<reference key="1">
    <citation type="journal article" date="2008" name="J. Bacteriol.">
        <title>Complete genome sequence of Leuconostoc citreum KM20.</title>
        <authorList>
            <person name="Kim J.F."/>
            <person name="Jeong H."/>
            <person name="Lee J.-S."/>
            <person name="Choi S.-H."/>
            <person name="Ha M."/>
            <person name="Hur C.-G."/>
            <person name="Kim J.-S."/>
            <person name="Lee S."/>
            <person name="Park H.-S."/>
            <person name="Park Y.-H."/>
            <person name="Oh T.K."/>
        </authorList>
    </citation>
    <scope>NUCLEOTIDE SEQUENCE [LARGE SCALE GENOMIC DNA]</scope>
    <source>
        <strain>KM20</strain>
    </source>
</reference>